<feature type="chain" id="PRO_1000075411" description="Glutamyl-tRNA reductase">
    <location>
        <begin position="1"/>
        <end position="442"/>
    </location>
</feature>
<feature type="active site" description="Nucleophile" evidence="1">
    <location>
        <position position="50"/>
    </location>
</feature>
<feature type="binding site" evidence="1">
    <location>
        <begin position="49"/>
        <end position="52"/>
    </location>
    <ligand>
        <name>substrate</name>
    </ligand>
</feature>
<feature type="binding site" evidence="1">
    <location>
        <position position="109"/>
    </location>
    <ligand>
        <name>substrate</name>
    </ligand>
</feature>
<feature type="binding site" evidence="1">
    <location>
        <begin position="114"/>
        <end position="116"/>
    </location>
    <ligand>
        <name>substrate</name>
    </ligand>
</feature>
<feature type="binding site" evidence="1">
    <location>
        <position position="120"/>
    </location>
    <ligand>
        <name>substrate</name>
    </ligand>
</feature>
<feature type="binding site" evidence="1">
    <location>
        <begin position="189"/>
        <end position="194"/>
    </location>
    <ligand>
        <name>NADP(+)</name>
        <dbReference type="ChEBI" id="CHEBI:58349"/>
    </ligand>
</feature>
<feature type="site" description="Important for activity" evidence="1">
    <location>
        <position position="99"/>
    </location>
</feature>
<dbReference type="EC" id="1.2.1.70" evidence="1"/>
<dbReference type="EMBL" id="CP000750">
    <property type="protein sequence ID" value="ABS02106.1"/>
    <property type="molecule type" value="Genomic_DNA"/>
</dbReference>
<dbReference type="SMR" id="A6W5L7"/>
<dbReference type="STRING" id="266940.Krad_0617"/>
<dbReference type="KEGG" id="kra:Krad_0617"/>
<dbReference type="eggNOG" id="COG0373">
    <property type="taxonomic scope" value="Bacteria"/>
</dbReference>
<dbReference type="HOGENOM" id="CLU_035113_4_0_11"/>
<dbReference type="OrthoDB" id="110209at2"/>
<dbReference type="UniPathway" id="UPA00251">
    <property type="reaction ID" value="UER00316"/>
</dbReference>
<dbReference type="Proteomes" id="UP000001116">
    <property type="component" value="Chromosome"/>
</dbReference>
<dbReference type="GO" id="GO:0008883">
    <property type="term" value="F:glutamyl-tRNA reductase activity"/>
    <property type="evidence" value="ECO:0007669"/>
    <property type="project" value="UniProtKB-UniRule"/>
</dbReference>
<dbReference type="GO" id="GO:0050661">
    <property type="term" value="F:NADP binding"/>
    <property type="evidence" value="ECO:0007669"/>
    <property type="project" value="InterPro"/>
</dbReference>
<dbReference type="GO" id="GO:0019353">
    <property type="term" value="P:protoporphyrinogen IX biosynthetic process from glutamate"/>
    <property type="evidence" value="ECO:0007669"/>
    <property type="project" value="TreeGrafter"/>
</dbReference>
<dbReference type="CDD" id="cd05213">
    <property type="entry name" value="NAD_bind_Glutamyl_tRNA_reduct"/>
    <property type="match status" value="1"/>
</dbReference>
<dbReference type="FunFam" id="3.30.460.30:FF:000001">
    <property type="entry name" value="Glutamyl-tRNA reductase"/>
    <property type="match status" value="1"/>
</dbReference>
<dbReference type="Gene3D" id="3.30.460.30">
    <property type="entry name" value="Glutamyl-tRNA reductase, N-terminal domain"/>
    <property type="match status" value="1"/>
</dbReference>
<dbReference type="Gene3D" id="3.40.50.720">
    <property type="entry name" value="NAD(P)-binding Rossmann-like Domain"/>
    <property type="match status" value="1"/>
</dbReference>
<dbReference type="HAMAP" id="MF_00087">
    <property type="entry name" value="Glu_tRNA_reductase"/>
    <property type="match status" value="1"/>
</dbReference>
<dbReference type="InterPro" id="IPR000343">
    <property type="entry name" value="4pyrrol_synth_GluRdtase"/>
</dbReference>
<dbReference type="InterPro" id="IPR015896">
    <property type="entry name" value="4pyrrol_synth_GluRdtase_dimer"/>
</dbReference>
<dbReference type="InterPro" id="IPR015895">
    <property type="entry name" value="4pyrrol_synth_GluRdtase_N"/>
</dbReference>
<dbReference type="InterPro" id="IPR018214">
    <property type="entry name" value="GluRdtase_CS"/>
</dbReference>
<dbReference type="InterPro" id="IPR036453">
    <property type="entry name" value="GluRdtase_dimer_dom_sf"/>
</dbReference>
<dbReference type="InterPro" id="IPR036343">
    <property type="entry name" value="GluRdtase_N_sf"/>
</dbReference>
<dbReference type="InterPro" id="IPR036291">
    <property type="entry name" value="NAD(P)-bd_dom_sf"/>
</dbReference>
<dbReference type="InterPro" id="IPR006151">
    <property type="entry name" value="Shikm_DH/Glu-tRNA_Rdtase"/>
</dbReference>
<dbReference type="NCBIfam" id="TIGR01035">
    <property type="entry name" value="hemA"/>
    <property type="match status" value="1"/>
</dbReference>
<dbReference type="NCBIfam" id="NF000744">
    <property type="entry name" value="PRK00045.1-3"/>
    <property type="match status" value="1"/>
</dbReference>
<dbReference type="PANTHER" id="PTHR43013">
    <property type="entry name" value="GLUTAMYL-TRNA REDUCTASE"/>
    <property type="match status" value="1"/>
</dbReference>
<dbReference type="PANTHER" id="PTHR43013:SF1">
    <property type="entry name" value="GLUTAMYL-TRNA REDUCTASE"/>
    <property type="match status" value="1"/>
</dbReference>
<dbReference type="Pfam" id="PF00745">
    <property type="entry name" value="GlutR_dimer"/>
    <property type="match status" value="1"/>
</dbReference>
<dbReference type="Pfam" id="PF05201">
    <property type="entry name" value="GlutR_N"/>
    <property type="match status" value="1"/>
</dbReference>
<dbReference type="Pfam" id="PF01488">
    <property type="entry name" value="Shikimate_DH"/>
    <property type="match status" value="1"/>
</dbReference>
<dbReference type="PIRSF" id="PIRSF000445">
    <property type="entry name" value="4pyrrol_synth_GluRdtase"/>
    <property type="match status" value="1"/>
</dbReference>
<dbReference type="SUPFAM" id="SSF69742">
    <property type="entry name" value="Glutamyl tRNA-reductase catalytic, N-terminal domain"/>
    <property type="match status" value="1"/>
</dbReference>
<dbReference type="SUPFAM" id="SSF69075">
    <property type="entry name" value="Glutamyl tRNA-reductase dimerization domain"/>
    <property type="match status" value="1"/>
</dbReference>
<dbReference type="SUPFAM" id="SSF51735">
    <property type="entry name" value="NAD(P)-binding Rossmann-fold domains"/>
    <property type="match status" value="1"/>
</dbReference>
<dbReference type="PROSITE" id="PS00747">
    <property type="entry name" value="GLUTR"/>
    <property type="match status" value="1"/>
</dbReference>
<keyword id="KW-0521">NADP</keyword>
<keyword id="KW-0560">Oxidoreductase</keyword>
<keyword id="KW-0627">Porphyrin biosynthesis</keyword>
<keyword id="KW-1185">Reference proteome</keyword>
<reference key="1">
    <citation type="journal article" date="2008" name="PLoS ONE">
        <title>Survival in nuclear waste, extreme resistance, and potential applications gleaned from the genome sequence of Kineococcus radiotolerans SRS30216.</title>
        <authorList>
            <person name="Bagwell C.E."/>
            <person name="Bhat S."/>
            <person name="Hawkins G.M."/>
            <person name="Smith B.W."/>
            <person name="Biswas T."/>
            <person name="Hoover T.R."/>
            <person name="Saunders E."/>
            <person name="Han C.S."/>
            <person name="Tsodikov O.V."/>
            <person name="Shimkets L.J."/>
        </authorList>
    </citation>
    <scope>NUCLEOTIDE SEQUENCE [LARGE SCALE GENOMIC DNA]</scope>
    <source>
        <strain>ATCC BAA-149 / DSM 14245 / SRS30216</strain>
    </source>
</reference>
<sequence>MALMVVGLSHRTASLEVLERAAFDARGAEEVLRALTASPHVEEAFVLSTCNRVELYCDVSRFHGGVADIGDVLCRRIGRGLDELGDQLYVHYEDAGVEHLFKVACGLDSMAVGESQILGQLRLALRGLHERGLAGGTLDRLLQTALRVGKRAHSETRLDAAGASLVDTAMTRAAGVVGELPGRRALVVGAGAMSALVATTLARAGLDVVVANRTPDRAQRLAAAVGGRATGLDDLRAEVAAADLVVSCTGAVGHVLDVATVASALLDRPERPLFLADLALPRDVHPDVATLRGAHLVDLEGLGADLASSAVAQDLRAVRAIVAEEVAAHAASLRAADVAPTVVALRAQARHVVEVEMRRLASRVDLDDTTRSEVDRAVHRIVEKLLHTPTVRVKELAEAPGGVGYAAALRALFDLEVTAQGGALPGDAPLSGTVADAVGHVS</sequence>
<proteinExistence type="inferred from homology"/>
<evidence type="ECO:0000255" key="1">
    <source>
        <dbReference type="HAMAP-Rule" id="MF_00087"/>
    </source>
</evidence>
<organism>
    <name type="scientific">Kineococcus radiotolerans (strain ATCC BAA-149 / DSM 14245 / SRS30216)</name>
    <dbReference type="NCBI Taxonomy" id="266940"/>
    <lineage>
        <taxon>Bacteria</taxon>
        <taxon>Bacillati</taxon>
        <taxon>Actinomycetota</taxon>
        <taxon>Actinomycetes</taxon>
        <taxon>Kineosporiales</taxon>
        <taxon>Kineosporiaceae</taxon>
        <taxon>Kineococcus</taxon>
    </lineage>
</organism>
<comment type="function">
    <text evidence="1">Catalyzes the NADPH-dependent reduction of glutamyl-tRNA(Glu) to glutamate 1-semialdehyde (GSA).</text>
</comment>
<comment type="catalytic activity">
    <reaction evidence="1">
        <text>(S)-4-amino-5-oxopentanoate + tRNA(Glu) + NADP(+) = L-glutamyl-tRNA(Glu) + NADPH + H(+)</text>
        <dbReference type="Rhea" id="RHEA:12344"/>
        <dbReference type="Rhea" id="RHEA-COMP:9663"/>
        <dbReference type="Rhea" id="RHEA-COMP:9680"/>
        <dbReference type="ChEBI" id="CHEBI:15378"/>
        <dbReference type="ChEBI" id="CHEBI:57501"/>
        <dbReference type="ChEBI" id="CHEBI:57783"/>
        <dbReference type="ChEBI" id="CHEBI:58349"/>
        <dbReference type="ChEBI" id="CHEBI:78442"/>
        <dbReference type="ChEBI" id="CHEBI:78520"/>
        <dbReference type="EC" id="1.2.1.70"/>
    </reaction>
</comment>
<comment type="pathway">
    <text evidence="1">Porphyrin-containing compound metabolism; protoporphyrin-IX biosynthesis; 5-aminolevulinate from L-glutamyl-tRNA(Glu): step 1/2.</text>
</comment>
<comment type="subunit">
    <text evidence="1">Homodimer.</text>
</comment>
<comment type="domain">
    <text evidence="1">Possesses an unusual extended V-shaped dimeric structure with each monomer consisting of three distinct domains arranged along a curved 'spinal' alpha-helix. The N-terminal catalytic domain specifically recognizes the glutamate moiety of the substrate. The second domain is the NADPH-binding domain, and the third C-terminal domain is responsible for dimerization.</text>
</comment>
<comment type="miscellaneous">
    <text evidence="1">During catalysis, the active site Cys acts as a nucleophile attacking the alpha-carbonyl group of tRNA-bound glutamate with the formation of a thioester intermediate between enzyme and glutamate, and the concomitant release of tRNA(Glu). The thioester intermediate is finally reduced by direct hydride transfer from NADPH, to form the product GSA.</text>
</comment>
<comment type="similarity">
    <text evidence="1">Belongs to the glutamyl-tRNA reductase family.</text>
</comment>
<name>HEM1_KINRD</name>
<gene>
    <name evidence="1" type="primary">hemA</name>
    <name type="ordered locus">Krad_0617</name>
</gene>
<accession>A6W5L7</accession>
<protein>
    <recommendedName>
        <fullName evidence="1">Glutamyl-tRNA reductase</fullName>
        <shortName evidence="1">GluTR</shortName>
        <ecNumber evidence="1">1.2.1.70</ecNumber>
    </recommendedName>
</protein>